<keyword id="KW-0963">Cytoplasm</keyword>
<keyword id="KW-0413">Isomerase</keyword>
<keyword id="KW-0627">Porphyrin biosynthesis</keyword>
<keyword id="KW-0663">Pyridoxal phosphate</keyword>
<keyword id="KW-1185">Reference proteome</keyword>
<evidence type="ECO:0000255" key="1">
    <source>
        <dbReference type="HAMAP-Rule" id="MF_00375"/>
    </source>
</evidence>
<reference key="1">
    <citation type="submission" date="2006-12" db="EMBL/GenBank/DDBJ databases">
        <title>Complete sequence of chromosome 1 of Nocardioides sp. JS614.</title>
        <authorList>
            <person name="Copeland A."/>
            <person name="Lucas S."/>
            <person name="Lapidus A."/>
            <person name="Barry K."/>
            <person name="Detter J.C."/>
            <person name="Glavina del Rio T."/>
            <person name="Hammon N."/>
            <person name="Israni S."/>
            <person name="Dalin E."/>
            <person name="Tice H."/>
            <person name="Pitluck S."/>
            <person name="Thompson L.S."/>
            <person name="Brettin T."/>
            <person name="Bruce D."/>
            <person name="Han C."/>
            <person name="Tapia R."/>
            <person name="Schmutz J."/>
            <person name="Larimer F."/>
            <person name="Land M."/>
            <person name="Hauser L."/>
            <person name="Kyrpides N."/>
            <person name="Kim E."/>
            <person name="Mattes T."/>
            <person name="Gossett J."/>
            <person name="Richardson P."/>
        </authorList>
    </citation>
    <scope>NUCLEOTIDE SEQUENCE [LARGE SCALE GENOMIC DNA]</scope>
    <source>
        <strain>ATCC BAA-499 / JS614</strain>
    </source>
</reference>
<name>GSA_NOCSJ</name>
<proteinExistence type="inferred from homology"/>
<sequence length="445" mass="45631">MTAGATLPTAASAALFERARAVTPGGVNSPVRAFNAVGGTPRFIRSARGAWLTDADGNEYVDLICSWGPMLLGHAHPEVQAAVSAAVARGTSYGAPTEPEVELAEEIAARAPVERVRFVSSGTEATMSAIRLARGFTGRDVVVKFAGCYHGHVDSLLASAGSGLATFAVPGTPGVPESSTALTLVLPYNDRAAVEKAFAEHGDRIACLITEAAPGNMGVVPPDADGSGGGFNGFLAETCARHGALFVSDEVMTGFRASRQGQWGLDGAVEGWRPDLMTFGKVMGGGFPAAAFGGRADVMSRLAPEGPVYQAGTLSGNPIATTAGLATLRLATDDVYAHIGAAADTIKTAASDALSRAGVEHVVQAAGTMFSVFLTAGPVRDFADASRTDVAAYAAFFHAMLDQGVYLPPSAYEAWFLSSAHDDRAVQTVLDALPTAARAAAAAQT</sequence>
<protein>
    <recommendedName>
        <fullName evidence="1">Glutamate-1-semialdehyde 2,1-aminomutase</fullName>
        <shortName evidence="1">GSA</shortName>
        <ecNumber evidence="1">5.4.3.8</ecNumber>
    </recommendedName>
    <alternativeName>
        <fullName evidence="1">Glutamate-1-semialdehyde aminotransferase</fullName>
        <shortName evidence="1">GSA-AT</shortName>
    </alternativeName>
</protein>
<organism>
    <name type="scientific">Nocardioides sp. (strain ATCC BAA-499 / JS614)</name>
    <dbReference type="NCBI Taxonomy" id="196162"/>
    <lineage>
        <taxon>Bacteria</taxon>
        <taxon>Bacillati</taxon>
        <taxon>Actinomycetota</taxon>
        <taxon>Actinomycetes</taxon>
        <taxon>Propionibacteriales</taxon>
        <taxon>Nocardioidaceae</taxon>
        <taxon>Nocardioides</taxon>
    </lineage>
</organism>
<gene>
    <name evidence="1" type="primary">hemL</name>
    <name type="ordered locus">Noca_0499</name>
</gene>
<accession>A1SE06</accession>
<dbReference type="EC" id="5.4.3.8" evidence="1"/>
<dbReference type="EMBL" id="CP000509">
    <property type="protein sequence ID" value="ABL80041.1"/>
    <property type="molecule type" value="Genomic_DNA"/>
</dbReference>
<dbReference type="RefSeq" id="WP_011753991.1">
    <property type="nucleotide sequence ID" value="NC_008699.1"/>
</dbReference>
<dbReference type="SMR" id="A1SE06"/>
<dbReference type="STRING" id="196162.Noca_0499"/>
<dbReference type="KEGG" id="nca:Noca_0499"/>
<dbReference type="eggNOG" id="COG0001">
    <property type="taxonomic scope" value="Bacteria"/>
</dbReference>
<dbReference type="HOGENOM" id="CLU_016922_1_5_11"/>
<dbReference type="OrthoDB" id="4510254at2"/>
<dbReference type="UniPathway" id="UPA00251">
    <property type="reaction ID" value="UER00317"/>
</dbReference>
<dbReference type="Proteomes" id="UP000000640">
    <property type="component" value="Chromosome"/>
</dbReference>
<dbReference type="GO" id="GO:0005737">
    <property type="term" value="C:cytoplasm"/>
    <property type="evidence" value="ECO:0007669"/>
    <property type="project" value="UniProtKB-SubCell"/>
</dbReference>
<dbReference type="GO" id="GO:0042286">
    <property type="term" value="F:glutamate-1-semialdehyde 2,1-aminomutase activity"/>
    <property type="evidence" value="ECO:0007669"/>
    <property type="project" value="UniProtKB-UniRule"/>
</dbReference>
<dbReference type="GO" id="GO:0030170">
    <property type="term" value="F:pyridoxal phosphate binding"/>
    <property type="evidence" value="ECO:0007669"/>
    <property type="project" value="InterPro"/>
</dbReference>
<dbReference type="GO" id="GO:0008483">
    <property type="term" value="F:transaminase activity"/>
    <property type="evidence" value="ECO:0007669"/>
    <property type="project" value="InterPro"/>
</dbReference>
<dbReference type="GO" id="GO:0006782">
    <property type="term" value="P:protoporphyrinogen IX biosynthetic process"/>
    <property type="evidence" value="ECO:0007669"/>
    <property type="project" value="UniProtKB-UniRule"/>
</dbReference>
<dbReference type="CDD" id="cd00610">
    <property type="entry name" value="OAT_like"/>
    <property type="match status" value="1"/>
</dbReference>
<dbReference type="FunFam" id="3.40.640.10:FF:000021">
    <property type="entry name" value="Glutamate-1-semialdehyde 2,1-aminomutase"/>
    <property type="match status" value="1"/>
</dbReference>
<dbReference type="Gene3D" id="3.90.1150.10">
    <property type="entry name" value="Aspartate Aminotransferase, domain 1"/>
    <property type="match status" value="1"/>
</dbReference>
<dbReference type="Gene3D" id="3.40.640.10">
    <property type="entry name" value="Type I PLP-dependent aspartate aminotransferase-like (Major domain)"/>
    <property type="match status" value="1"/>
</dbReference>
<dbReference type="HAMAP" id="MF_00375">
    <property type="entry name" value="HemL_aminotrans_3"/>
    <property type="match status" value="1"/>
</dbReference>
<dbReference type="InterPro" id="IPR004639">
    <property type="entry name" value="4pyrrol_synth_GluAld_NH2Trfase"/>
</dbReference>
<dbReference type="InterPro" id="IPR005814">
    <property type="entry name" value="Aminotrans_3"/>
</dbReference>
<dbReference type="InterPro" id="IPR049704">
    <property type="entry name" value="Aminotrans_3_PPA_site"/>
</dbReference>
<dbReference type="InterPro" id="IPR015424">
    <property type="entry name" value="PyrdxlP-dep_Trfase"/>
</dbReference>
<dbReference type="InterPro" id="IPR015421">
    <property type="entry name" value="PyrdxlP-dep_Trfase_major"/>
</dbReference>
<dbReference type="InterPro" id="IPR015422">
    <property type="entry name" value="PyrdxlP-dep_Trfase_small"/>
</dbReference>
<dbReference type="NCBIfam" id="TIGR00713">
    <property type="entry name" value="hemL"/>
    <property type="match status" value="1"/>
</dbReference>
<dbReference type="NCBIfam" id="NF000818">
    <property type="entry name" value="PRK00062.1"/>
    <property type="match status" value="1"/>
</dbReference>
<dbReference type="PANTHER" id="PTHR43713">
    <property type="entry name" value="GLUTAMATE-1-SEMIALDEHYDE 2,1-AMINOMUTASE"/>
    <property type="match status" value="1"/>
</dbReference>
<dbReference type="PANTHER" id="PTHR43713:SF3">
    <property type="entry name" value="GLUTAMATE-1-SEMIALDEHYDE 2,1-AMINOMUTASE 1, CHLOROPLASTIC-RELATED"/>
    <property type="match status" value="1"/>
</dbReference>
<dbReference type="Pfam" id="PF00202">
    <property type="entry name" value="Aminotran_3"/>
    <property type="match status" value="1"/>
</dbReference>
<dbReference type="SUPFAM" id="SSF53383">
    <property type="entry name" value="PLP-dependent transferases"/>
    <property type="match status" value="1"/>
</dbReference>
<dbReference type="PROSITE" id="PS00600">
    <property type="entry name" value="AA_TRANSFER_CLASS_3"/>
    <property type="match status" value="1"/>
</dbReference>
<feature type="chain" id="PRO_0000382353" description="Glutamate-1-semialdehyde 2,1-aminomutase">
    <location>
        <begin position="1"/>
        <end position="445"/>
    </location>
</feature>
<feature type="modified residue" description="N6-(pyridoxal phosphate)lysine" evidence="1">
    <location>
        <position position="281"/>
    </location>
</feature>
<comment type="catalytic activity">
    <reaction evidence="1">
        <text>(S)-4-amino-5-oxopentanoate = 5-aminolevulinate</text>
        <dbReference type="Rhea" id="RHEA:14265"/>
        <dbReference type="ChEBI" id="CHEBI:57501"/>
        <dbReference type="ChEBI" id="CHEBI:356416"/>
        <dbReference type="EC" id="5.4.3.8"/>
    </reaction>
</comment>
<comment type="cofactor">
    <cofactor evidence="1">
        <name>pyridoxal 5'-phosphate</name>
        <dbReference type="ChEBI" id="CHEBI:597326"/>
    </cofactor>
</comment>
<comment type="pathway">
    <text evidence="1">Porphyrin-containing compound metabolism; protoporphyrin-IX biosynthesis; 5-aminolevulinate from L-glutamyl-tRNA(Glu): step 2/2.</text>
</comment>
<comment type="subunit">
    <text evidence="1">Homodimer.</text>
</comment>
<comment type="subcellular location">
    <subcellularLocation>
        <location evidence="1">Cytoplasm</location>
    </subcellularLocation>
</comment>
<comment type="similarity">
    <text evidence="1">Belongs to the class-III pyridoxal-phosphate-dependent aminotransferase family. HemL subfamily.</text>
</comment>